<gene>
    <name evidence="1" type="primary">uppP</name>
    <name type="synonym">bacA</name>
    <name type="ordered locus">P9301_09021</name>
</gene>
<protein>
    <recommendedName>
        <fullName evidence="1">Undecaprenyl-diphosphatase</fullName>
        <ecNumber evidence="1">3.6.1.27</ecNumber>
    </recommendedName>
    <alternativeName>
        <fullName evidence="1">Bacitracin resistance protein</fullName>
    </alternativeName>
    <alternativeName>
        <fullName evidence="1">Undecaprenyl pyrophosphate phosphatase</fullName>
    </alternativeName>
</protein>
<evidence type="ECO:0000255" key="1">
    <source>
        <dbReference type="HAMAP-Rule" id="MF_01006"/>
    </source>
</evidence>
<accession>A3PCQ0</accession>
<sequence length="266" mass="29550">MEYLKFVLYGLIQGLTEFIPVSSTAHLKVISLFLGIDDPGASLSATIQLGSVIAIAYYFRNDIFNFRSQSSKKFLEYLFHERLLRSIFIGTIPIVLLGGSIKIFIPSFFENVLRSNLSIALVSFLMAFFMYLADSSKRGSINIKNHNFSNSFLIGIFQAFAIFPGVSRSGVTISSALISGWERGDAAKFSFLLGMPAISLAAIVEFVSSFNDFFSLGFFPLFVGLITTFLSSLLAIDFLLKYFSSNGLKIFIIYRVIFGVVILLNL</sequence>
<keyword id="KW-0046">Antibiotic resistance</keyword>
<keyword id="KW-0997">Cell inner membrane</keyword>
<keyword id="KW-1003">Cell membrane</keyword>
<keyword id="KW-0133">Cell shape</keyword>
<keyword id="KW-0961">Cell wall biogenesis/degradation</keyword>
<keyword id="KW-0378">Hydrolase</keyword>
<keyword id="KW-0472">Membrane</keyword>
<keyword id="KW-0573">Peptidoglycan synthesis</keyword>
<keyword id="KW-1185">Reference proteome</keyword>
<keyword id="KW-0812">Transmembrane</keyword>
<keyword id="KW-1133">Transmembrane helix</keyword>
<name>UPPP_PROM0</name>
<organism>
    <name type="scientific">Prochlorococcus marinus (strain MIT 9301)</name>
    <dbReference type="NCBI Taxonomy" id="167546"/>
    <lineage>
        <taxon>Bacteria</taxon>
        <taxon>Bacillati</taxon>
        <taxon>Cyanobacteriota</taxon>
        <taxon>Cyanophyceae</taxon>
        <taxon>Synechococcales</taxon>
        <taxon>Prochlorococcaceae</taxon>
        <taxon>Prochlorococcus</taxon>
    </lineage>
</organism>
<proteinExistence type="inferred from homology"/>
<comment type="function">
    <text evidence="1">Catalyzes the dephosphorylation of undecaprenyl diphosphate (UPP). Confers resistance to bacitracin.</text>
</comment>
<comment type="catalytic activity">
    <reaction evidence="1">
        <text>di-trans,octa-cis-undecaprenyl diphosphate + H2O = di-trans,octa-cis-undecaprenyl phosphate + phosphate + H(+)</text>
        <dbReference type="Rhea" id="RHEA:28094"/>
        <dbReference type="ChEBI" id="CHEBI:15377"/>
        <dbReference type="ChEBI" id="CHEBI:15378"/>
        <dbReference type="ChEBI" id="CHEBI:43474"/>
        <dbReference type="ChEBI" id="CHEBI:58405"/>
        <dbReference type="ChEBI" id="CHEBI:60392"/>
        <dbReference type="EC" id="3.6.1.27"/>
    </reaction>
</comment>
<comment type="subcellular location">
    <subcellularLocation>
        <location evidence="1">Cell inner membrane</location>
        <topology evidence="1">Multi-pass membrane protein</topology>
    </subcellularLocation>
</comment>
<comment type="miscellaneous">
    <text>Bacitracin is thought to be involved in the inhibition of peptidoglycan synthesis by sequestering undecaprenyl diphosphate, thereby reducing the pool of lipid carrier available.</text>
</comment>
<comment type="similarity">
    <text evidence="1">Belongs to the UppP family.</text>
</comment>
<feature type="chain" id="PRO_0000290746" description="Undecaprenyl-diphosphatase">
    <location>
        <begin position="1"/>
        <end position="266"/>
    </location>
</feature>
<feature type="transmembrane region" description="Helical" evidence="1">
    <location>
        <begin position="39"/>
        <end position="59"/>
    </location>
</feature>
<feature type="transmembrane region" description="Helical" evidence="1">
    <location>
        <begin position="86"/>
        <end position="106"/>
    </location>
</feature>
<feature type="transmembrane region" description="Helical" evidence="1">
    <location>
        <begin position="112"/>
        <end position="132"/>
    </location>
</feature>
<feature type="transmembrane region" description="Helical" evidence="1">
    <location>
        <begin position="147"/>
        <end position="167"/>
    </location>
</feature>
<feature type="transmembrane region" description="Helical" evidence="1">
    <location>
        <begin position="189"/>
        <end position="209"/>
    </location>
</feature>
<feature type="transmembrane region" description="Helical" evidence="1">
    <location>
        <begin position="216"/>
        <end position="236"/>
    </location>
</feature>
<feature type="transmembrane region" description="Helical" evidence="1">
    <location>
        <begin position="246"/>
        <end position="266"/>
    </location>
</feature>
<reference key="1">
    <citation type="journal article" date="2007" name="PLoS Genet.">
        <title>Patterns and implications of gene gain and loss in the evolution of Prochlorococcus.</title>
        <authorList>
            <person name="Kettler G.C."/>
            <person name="Martiny A.C."/>
            <person name="Huang K."/>
            <person name="Zucker J."/>
            <person name="Coleman M.L."/>
            <person name="Rodrigue S."/>
            <person name="Chen F."/>
            <person name="Lapidus A."/>
            <person name="Ferriera S."/>
            <person name="Johnson J."/>
            <person name="Steglich C."/>
            <person name="Church G.M."/>
            <person name="Richardson P."/>
            <person name="Chisholm S.W."/>
        </authorList>
    </citation>
    <scope>NUCLEOTIDE SEQUENCE [LARGE SCALE GENOMIC DNA]</scope>
    <source>
        <strain>MIT 9301</strain>
    </source>
</reference>
<dbReference type="EC" id="3.6.1.27" evidence="1"/>
<dbReference type="EMBL" id="CP000576">
    <property type="protein sequence ID" value="ABO17525.1"/>
    <property type="molecule type" value="Genomic_DNA"/>
</dbReference>
<dbReference type="RefSeq" id="WP_011862874.1">
    <property type="nucleotide sequence ID" value="NC_009091.1"/>
</dbReference>
<dbReference type="SMR" id="A3PCQ0"/>
<dbReference type="STRING" id="167546.P9301_09021"/>
<dbReference type="KEGG" id="pmg:P9301_09021"/>
<dbReference type="eggNOG" id="COG1968">
    <property type="taxonomic scope" value="Bacteria"/>
</dbReference>
<dbReference type="HOGENOM" id="CLU_060296_1_0_3"/>
<dbReference type="OrthoDB" id="9808289at2"/>
<dbReference type="Proteomes" id="UP000001430">
    <property type="component" value="Chromosome"/>
</dbReference>
<dbReference type="GO" id="GO:0005886">
    <property type="term" value="C:plasma membrane"/>
    <property type="evidence" value="ECO:0007669"/>
    <property type="project" value="UniProtKB-SubCell"/>
</dbReference>
<dbReference type="GO" id="GO:0050380">
    <property type="term" value="F:undecaprenyl-diphosphatase activity"/>
    <property type="evidence" value="ECO:0007669"/>
    <property type="project" value="UniProtKB-UniRule"/>
</dbReference>
<dbReference type="GO" id="GO:0071555">
    <property type="term" value="P:cell wall organization"/>
    <property type="evidence" value="ECO:0007669"/>
    <property type="project" value="UniProtKB-KW"/>
</dbReference>
<dbReference type="GO" id="GO:0009252">
    <property type="term" value="P:peptidoglycan biosynthetic process"/>
    <property type="evidence" value="ECO:0007669"/>
    <property type="project" value="UniProtKB-KW"/>
</dbReference>
<dbReference type="GO" id="GO:0008360">
    <property type="term" value="P:regulation of cell shape"/>
    <property type="evidence" value="ECO:0007669"/>
    <property type="project" value="UniProtKB-KW"/>
</dbReference>
<dbReference type="GO" id="GO:0046677">
    <property type="term" value="P:response to antibiotic"/>
    <property type="evidence" value="ECO:0007669"/>
    <property type="project" value="UniProtKB-UniRule"/>
</dbReference>
<dbReference type="HAMAP" id="MF_01006">
    <property type="entry name" value="Undec_diphosphatase"/>
    <property type="match status" value="1"/>
</dbReference>
<dbReference type="InterPro" id="IPR003824">
    <property type="entry name" value="UppP"/>
</dbReference>
<dbReference type="PANTHER" id="PTHR30622">
    <property type="entry name" value="UNDECAPRENYL-DIPHOSPHATASE"/>
    <property type="match status" value="1"/>
</dbReference>
<dbReference type="PANTHER" id="PTHR30622:SF4">
    <property type="entry name" value="UNDECAPRENYL-DIPHOSPHATASE"/>
    <property type="match status" value="1"/>
</dbReference>
<dbReference type="Pfam" id="PF02673">
    <property type="entry name" value="BacA"/>
    <property type="match status" value="1"/>
</dbReference>